<keyword id="KW-0067">ATP-binding</keyword>
<keyword id="KW-0156">Chromatin regulator</keyword>
<keyword id="KW-0227">DNA damage</keyword>
<keyword id="KW-0234">DNA repair</keyword>
<keyword id="KW-0347">Helicase</keyword>
<keyword id="KW-0378">Hydrolase</keyword>
<keyword id="KW-0547">Nucleotide-binding</keyword>
<keyword id="KW-0539">Nucleus</keyword>
<keyword id="KW-1185">Reference proteome</keyword>
<keyword id="KW-0678">Repressor</keyword>
<keyword id="KW-0804">Transcription</keyword>
<keyword id="KW-0805">Transcription regulation</keyword>
<gene>
    <name evidence="2" type="primary">rept</name>
    <name type="ORF">GA22008</name>
</gene>
<accession>Q29DI0</accession>
<proteinExistence type="inferred from homology"/>
<protein>
    <recommendedName>
        <fullName>RuvB-like helicase 2</fullName>
        <ecNumber>3.6.4.12</ecNumber>
    </recommendedName>
    <alternativeName>
        <fullName>Reptin</fullName>
    </alternativeName>
</protein>
<sequence length="480" mass="53541">MTEAEKIEVRDITRIERIGAHSHIRGLGLDDVLEARAVSQGMVGQKDARRAAGVVVQMVREGKIAGRCILLAGEPSTGKTAIAVGMAQALGTETPFTSMSGSEIYSLEMSKTEALSQALRKSIGVRIKEETEIIEGEVVEIQIERPATGTGQKVGKVTLKTTEMETNYDLGNKIIECFMKEKIQAGDVITIDKASGKVNKLGRSFTRARDYDATGAQTRFVQCPEGELQKRKEVVHTVTLHEIDVINSRTHGFLALFSGDTGEIKQEVRDQINNKVLEWREEGKAEINPGVLFIDEVHMLDIECFSYLNRALESDMAPVVVMATNRGITRIRGTNYRSPHGIPIDLLDRMIIIRTVPYSEKEVKEILKIRCEEEDCVMHPDALTILTRIATDTSLRYAIQLITTANLVCRRRKATEVNTEDVKKVYSLFLDENRSSKILKEYQDDYMFSEITEKEEDFGIGGGSKRRLDIGAGDAEAMEH</sequence>
<comment type="function">
    <text evidence="1">Acts as a transcriptional coactivator in Wg signaling caused by altered arm signaling. Pont and rept interfere antagonistically with nuclear arm signaling function, and are required to enhance or reduce arm activity, respectively. Also an essential cofactor for the normal function of Myc; required for cellular proliferation and growth (By similarity).</text>
</comment>
<comment type="function">
    <text evidence="1">Proposed core component of the chromatin remodeling Ino80 complex which is involved in transcriptional regulation, DNA replication and probably DNA repair.</text>
</comment>
<comment type="catalytic activity">
    <reaction>
        <text>ATP + H2O = ADP + phosphate + H(+)</text>
        <dbReference type="Rhea" id="RHEA:13065"/>
        <dbReference type="ChEBI" id="CHEBI:15377"/>
        <dbReference type="ChEBI" id="CHEBI:15378"/>
        <dbReference type="ChEBI" id="CHEBI:30616"/>
        <dbReference type="ChEBI" id="CHEBI:43474"/>
        <dbReference type="ChEBI" id="CHEBI:456216"/>
        <dbReference type="EC" id="3.6.4.12"/>
    </reaction>
</comment>
<comment type="subunit">
    <text evidence="1">Forms homohexameric rings. May form a dodecamer with rept made of two stacked hexameric rings. Component of the chromatin remodeling Ino80 complex (By similarity).</text>
</comment>
<comment type="subcellular location">
    <subcellularLocation>
        <location evidence="2">Nucleus</location>
    </subcellularLocation>
</comment>
<comment type="similarity">
    <text evidence="4">Belongs to the RuvB family.</text>
</comment>
<comment type="sequence caution" evidence="4">
    <conflict type="erroneous gene model prediction">
        <sequence resource="EMBL-CDS" id="EAL30434"/>
    </conflict>
</comment>
<evidence type="ECO:0000250" key="1"/>
<evidence type="ECO:0000250" key="2">
    <source>
        <dbReference type="UniProtKB" id="Q9V3K3"/>
    </source>
</evidence>
<evidence type="ECO:0000250" key="3">
    <source>
        <dbReference type="UniProtKB" id="Q9Y230"/>
    </source>
</evidence>
<evidence type="ECO:0000305" key="4"/>
<evidence type="ECO:0000312" key="5">
    <source>
        <dbReference type="EMBL" id="EAL30434.1"/>
    </source>
</evidence>
<organism>
    <name type="scientific">Drosophila pseudoobscura pseudoobscura</name>
    <name type="common">Fruit fly</name>
    <dbReference type="NCBI Taxonomy" id="46245"/>
    <lineage>
        <taxon>Eukaryota</taxon>
        <taxon>Metazoa</taxon>
        <taxon>Ecdysozoa</taxon>
        <taxon>Arthropoda</taxon>
        <taxon>Hexapoda</taxon>
        <taxon>Insecta</taxon>
        <taxon>Pterygota</taxon>
        <taxon>Neoptera</taxon>
        <taxon>Endopterygota</taxon>
        <taxon>Diptera</taxon>
        <taxon>Brachycera</taxon>
        <taxon>Muscomorpha</taxon>
        <taxon>Ephydroidea</taxon>
        <taxon>Drosophilidae</taxon>
        <taxon>Drosophila</taxon>
        <taxon>Sophophora</taxon>
    </lineage>
</organism>
<name>RUVB2_DROPS</name>
<feature type="chain" id="PRO_0000306324" description="RuvB-like helicase 2">
    <location>
        <begin position="1"/>
        <end position="480"/>
    </location>
</feature>
<feature type="binding site" evidence="3">
    <location>
        <begin position="73"/>
        <end position="80"/>
    </location>
    <ligand>
        <name>ATP</name>
        <dbReference type="ChEBI" id="CHEBI:30616"/>
    </ligand>
</feature>
<dbReference type="EC" id="3.6.4.12"/>
<dbReference type="EMBL" id="CH379070">
    <property type="protein sequence ID" value="EAL30434.1"/>
    <property type="status" value="ALT_SEQ"/>
    <property type="molecule type" value="Genomic_DNA"/>
</dbReference>
<dbReference type="RefSeq" id="XP_001352933.1">
    <property type="nucleotide sequence ID" value="XM_001352897.3"/>
</dbReference>
<dbReference type="SMR" id="Q29DI0"/>
<dbReference type="FunCoup" id="Q29DI0">
    <property type="interactions" value="2136"/>
</dbReference>
<dbReference type="STRING" id="46245.Q29DI0"/>
<dbReference type="EnsemblMetazoa" id="FBtr0288606">
    <property type="protein sequence ID" value="FBpp0287044"/>
    <property type="gene ID" value="FBgn0081993"/>
</dbReference>
<dbReference type="GeneID" id="4812022"/>
<dbReference type="KEGG" id="dpo:4812022"/>
<dbReference type="CTD" id="40092"/>
<dbReference type="eggNOG" id="KOG2680">
    <property type="taxonomic scope" value="Eukaryota"/>
</dbReference>
<dbReference type="HOGENOM" id="CLU_028311_4_0_1"/>
<dbReference type="InParanoid" id="Q29DI0"/>
<dbReference type="OMA" id="IINTEPY"/>
<dbReference type="PhylomeDB" id="Q29DI0"/>
<dbReference type="Proteomes" id="UP000001819">
    <property type="component" value="Chromosome X"/>
</dbReference>
<dbReference type="Bgee" id="FBgn0081993">
    <property type="expression patterns" value="Expressed in female reproductive system and 3 other cell types or tissues"/>
</dbReference>
<dbReference type="GO" id="GO:0035267">
    <property type="term" value="C:NuA4 histone acetyltransferase complex"/>
    <property type="evidence" value="ECO:0000250"/>
    <property type="project" value="UniProtKB"/>
</dbReference>
<dbReference type="GO" id="GO:0005634">
    <property type="term" value="C:nucleus"/>
    <property type="evidence" value="ECO:0000250"/>
    <property type="project" value="UniProtKB"/>
</dbReference>
<dbReference type="GO" id="GO:0005524">
    <property type="term" value="F:ATP binding"/>
    <property type="evidence" value="ECO:0007669"/>
    <property type="project" value="UniProtKB-KW"/>
</dbReference>
<dbReference type="GO" id="GO:0016887">
    <property type="term" value="F:ATP hydrolysis activity"/>
    <property type="evidence" value="ECO:0007669"/>
    <property type="project" value="InterPro"/>
</dbReference>
<dbReference type="GO" id="GO:0008094">
    <property type="term" value="F:ATP-dependent activity, acting on DNA"/>
    <property type="evidence" value="ECO:0007669"/>
    <property type="project" value="InterPro"/>
</dbReference>
<dbReference type="GO" id="GO:0004386">
    <property type="term" value="F:helicase activity"/>
    <property type="evidence" value="ECO:0007669"/>
    <property type="project" value="UniProtKB-KW"/>
</dbReference>
<dbReference type="GO" id="GO:0003714">
    <property type="term" value="F:transcription corepressor activity"/>
    <property type="evidence" value="ECO:0000250"/>
    <property type="project" value="UniProtKB"/>
</dbReference>
<dbReference type="GO" id="GO:0006325">
    <property type="term" value="P:chromatin organization"/>
    <property type="evidence" value="ECO:0007669"/>
    <property type="project" value="UniProtKB-KW"/>
</dbReference>
<dbReference type="GO" id="GO:0006281">
    <property type="term" value="P:DNA repair"/>
    <property type="evidence" value="ECO:0007669"/>
    <property type="project" value="UniProtKB-KW"/>
</dbReference>
<dbReference type="GO" id="GO:0090090">
    <property type="term" value="P:negative regulation of canonical Wnt signaling pathway"/>
    <property type="evidence" value="ECO:0000250"/>
    <property type="project" value="UniProtKB"/>
</dbReference>
<dbReference type="GO" id="GO:0042127">
    <property type="term" value="P:regulation of cell population proliferation"/>
    <property type="evidence" value="ECO:0000250"/>
    <property type="project" value="UniProtKB"/>
</dbReference>
<dbReference type="FunFam" id="3.40.50.300:FF:002221">
    <property type="entry name" value="RuvB-like 2"/>
    <property type="match status" value="2"/>
</dbReference>
<dbReference type="FunFam" id="1.10.8.60:FF:000010">
    <property type="entry name" value="RuvB-like helicase"/>
    <property type="match status" value="1"/>
</dbReference>
<dbReference type="FunFam" id="2.40.50.360:FF:000002">
    <property type="entry name" value="RuvB-like helicase"/>
    <property type="match status" value="1"/>
</dbReference>
<dbReference type="Gene3D" id="1.10.8.60">
    <property type="match status" value="1"/>
</dbReference>
<dbReference type="Gene3D" id="3.40.50.300">
    <property type="entry name" value="P-loop containing nucleotide triphosphate hydrolases"/>
    <property type="match status" value="1"/>
</dbReference>
<dbReference type="Gene3D" id="2.40.50.360">
    <property type="entry name" value="RuvB-like helicase, domain II"/>
    <property type="match status" value="1"/>
</dbReference>
<dbReference type="InterPro" id="IPR003593">
    <property type="entry name" value="AAA+_ATPase"/>
</dbReference>
<dbReference type="InterPro" id="IPR027417">
    <property type="entry name" value="P-loop_NTPase"/>
</dbReference>
<dbReference type="InterPro" id="IPR027238">
    <property type="entry name" value="RuvB-like"/>
</dbReference>
<dbReference type="InterPro" id="IPR041048">
    <property type="entry name" value="RuvB-like_C"/>
</dbReference>
<dbReference type="InterPro" id="IPR042487">
    <property type="entry name" value="RuvBL1/2_DNA/RNA_bd_dom"/>
</dbReference>
<dbReference type="InterPro" id="IPR010339">
    <property type="entry name" value="TIP49_P-loop"/>
</dbReference>
<dbReference type="PANTHER" id="PTHR11093">
    <property type="entry name" value="RUVB-RELATED REPTIN AND PONTIN"/>
    <property type="match status" value="1"/>
</dbReference>
<dbReference type="Pfam" id="PF06068">
    <property type="entry name" value="TIP49"/>
    <property type="match status" value="1"/>
</dbReference>
<dbReference type="Pfam" id="PF17856">
    <property type="entry name" value="TIP49_C"/>
    <property type="match status" value="1"/>
</dbReference>
<dbReference type="SMART" id="SM00382">
    <property type="entry name" value="AAA"/>
    <property type="match status" value="1"/>
</dbReference>
<dbReference type="SUPFAM" id="SSF52540">
    <property type="entry name" value="P-loop containing nucleoside triphosphate hydrolases"/>
    <property type="match status" value="1"/>
</dbReference>
<reference evidence="5" key="1">
    <citation type="journal article" date="2005" name="Genome Res.">
        <title>Comparative genome sequencing of Drosophila pseudoobscura: chromosomal, gene, and cis-element evolution.</title>
        <authorList>
            <person name="Richards S."/>
            <person name="Liu Y."/>
            <person name="Bettencourt B.R."/>
            <person name="Hradecky P."/>
            <person name="Letovsky S."/>
            <person name="Nielsen R."/>
            <person name="Thornton K."/>
            <person name="Hubisz M.J."/>
            <person name="Chen R."/>
            <person name="Meisel R.P."/>
            <person name="Couronne O."/>
            <person name="Hua S."/>
            <person name="Smith M.A."/>
            <person name="Zhang P."/>
            <person name="Liu J."/>
            <person name="Bussemaker H.J."/>
            <person name="van Batenburg M.F."/>
            <person name="Howells S.L."/>
            <person name="Scherer S.E."/>
            <person name="Sodergren E."/>
            <person name="Matthews B.B."/>
            <person name="Crosby M.A."/>
            <person name="Schroeder A.J."/>
            <person name="Ortiz-Barrientos D."/>
            <person name="Rives C.M."/>
            <person name="Metzker M.L."/>
            <person name="Muzny D.M."/>
            <person name="Scott G."/>
            <person name="Steffen D."/>
            <person name="Wheeler D.A."/>
            <person name="Worley K.C."/>
            <person name="Havlak P."/>
            <person name="Durbin K.J."/>
            <person name="Egan A."/>
            <person name="Gill R."/>
            <person name="Hume J."/>
            <person name="Morgan M.B."/>
            <person name="Miner G."/>
            <person name="Hamilton C."/>
            <person name="Huang Y."/>
            <person name="Waldron L."/>
            <person name="Verduzco D."/>
            <person name="Clerc-Blankenburg K.P."/>
            <person name="Dubchak I."/>
            <person name="Noor M.A.F."/>
            <person name="Anderson W."/>
            <person name="White K.P."/>
            <person name="Clark A.G."/>
            <person name="Schaeffer S.W."/>
            <person name="Gelbart W.M."/>
            <person name="Weinstock G.M."/>
            <person name="Gibbs R.A."/>
        </authorList>
    </citation>
    <scope>NUCLEOTIDE SEQUENCE [LARGE SCALE GENOMIC DNA]</scope>
    <source>
        <strain>MV2-25 / Tucson 14011-0121.94</strain>
    </source>
</reference>